<name>DXR_SALCH</name>
<protein>
    <recommendedName>
        <fullName evidence="1">1-deoxy-D-xylulose 5-phosphate reductoisomerase</fullName>
        <shortName evidence="1">DXP reductoisomerase</shortName>
        <ecNumber evidence="1">1.1.1.267</ecNumber>
    </recommendedName>
    <alternativeName>
        <fullName evidence="1">1-deoxyxylulose-5-phosphate reductoisomerase</fullName>
    </alternativeName>
    <alternativeName>
        <fullName evidence="1">2-C-methyl-D-erythritol 4-phosphate synthase</fullName>
    </alternativeName>
</protein>
<keyword id="KW-0414">Isoprene biosynthesis</keyword>
<keyword id="KW-0464">Manganese</keyword>
<keyword id="KW-0479">Metal-binding</keyword>
<keyword id="KW-0521">NADP</keyword>
<keyword id="KW-0560">Oxidoreductase</keyword>
<dbReference type="EC" id="1.1.1.267" evidence="1"/>
<dbReference type="EMBL" id="AE017220">
    <property type="protein sequence ID" value="AAX64126.1"/>
    <property type="status" value="ALT_FRAME"/>
    <property type="molecule type" value="Genomic_DNA"/>
</dbReference>
<dbReference type="SMR" id="Q57T35"/>
<dbReference type="KEGG" id="sec:SCH_0220"/>
<dbReference type="HOGENOM" id="CLU_035714_4_0_6"/>
<dbReference type="UniPathway" id="UPA00056">
    <property type="reaction ID" value="UER00092"/>
</dbReference>
<dbReference type="Proteomes" id="UP000000538">
    <property type="component" value="Chromosome"/>
</dbReference>
<dbReference type="GO" id="GO:0030604">
    <property type="term" value="F:1-deoxy-D-xylulose-5-phosphate reductoisomerase activity"/>
    <property type="evidence" value="ECO:0007669"/>
    <property type="project" value="UniProtKB-UniRule"/>
</dbReference>
<dbReference type="GO" id="GO:0030145">
    <property type="term" value="F:manganese ion binding"/>
    <property type="evidence" value="ECO:0007669"/>
    <property type="project" value="TreeGrafter"/>
</dbReference>
<dbReference type="GO" id="GO:0070402">
    <property type="term" value="F:NADPH binding"/>
    <property type="evidence" value="ECO:0007669"/>
    <property type="project" value="InterPro"/>
</dbReference>
<dbReference type="GO" id="GO:0051484">
    <property type="term" value="P:isopentenyl diphosphate biosynthetic process, methylerythritol 4-phosphate pathway involved in terpenoid biosynthetic process"/>
    <property type="evidence" value="ECO:0007669"/>
    <property type="project" value="TreeGrafter"/>
</dbReference>
<dbReference type="FunFam" id="1.10.1740.10:FF:000004">
    <property type="entry name" value="1-deoxy-D-xylulose 5-phosphate reductoisomerase"/>
    <property type="match status" value="1"/>
</dbReference>
<dbReference type="FunFam" id="3.40.50.720:FF:000045">
    <property type="entry name" value="1-deoxy-D-xylulose 5-phosphate reductoisomerase"/>
    <property type="match status" value="1"/>
</dbReference>
<dbReference type="Gene3D" id="1.10.1740.10">
    <property type="match status" value="1"/>
</dbReference>
<dbReference type="Gene3D" id="3.40.50.720">
    <property type="entry name" value="NAD(P)-binding Rossmann-like Domain"/>
    <property type="match status" value="1"/>
</dbReference>
<dbReference type="HAMAP" id="MF_00183">
    <property type="entry name" value="DXP_reductoisom"/>
    <property type="match status" value="1"/>
</dbReference>
<dbReference type="InterPro" id="IPR003821">
    <property type="entry name" value="DXP_reductoisomerase"/>
</dbReference>
<dbReference type="InterPro" id="IPR013644">
    <property type="entry name" value="DXP_reductoisomerase_C"/>
</dbReference>
<dbReference type="InterPro" id="IPR013512">
    <property type="entry name" value="DXP_reductoisomerase_N"/>
</dbReference>
<dbReference type="InterPro" id="IPR026877">
    <property type="entry name" value="DXPR_C"/>
</dbReference>
<dbReference type="InterPro" id="IPR036169">
    <property type="entry name" value="DXPR_C_sf"/>
</dbReference>
<dbReference type="InterPro" id="IPR036291">
    <property type="entry name" value="NAD(P)-bd_dom_sf"/>
</dbReference>
<dbReference type="NCBIfam" id="TIGR00243">
    <property type="entry name" value="Dxr"/>
    <property type="match status" value="1"/>
</dbReference>
<dbReference type="NCBIfam" id="NF003938">
    <property type="entry name" value="PRK05447.1-1"/>
    <property type="match status" value="1"/>
</dbReference>
<dbReference type="NCBIfam" id="NF009114">
    <property type="entry name" value="PRK12464.1"/>
    <property type="match status" value="1"/>
</dbReference>
<dbReference type="PANTHER" id="PTHR30525">
    <property type="entry name" value="1-DEOXY-D-XYLULOSE 5-PHOSPHATE REDUCTOISOMERASE"/>
    <property type="match status" value="1"/>
</dbReference>
<dbReference type="PANTHER" id="PTHR30525:SF0">
    <property type="entry name" value="1-DEOXY-D-XYLULOSE 5-PHOSPHATE REDUCTOISOMERASE, CHLOROPLASTIC"/>
    <property type="match status" value="1"/>
</dbReference>
<dbReference type="Pfam" id="PF08436">
    <property type="entry name" value="DXP_redisom_C"/>
    <property type="match status" value="1"/>
</dbReference>
<dbReference type="Pfam" id="PF02670">
    <property type="entry name" value="DXP_reductoisom"/>
    <property type="match status" value="1"/>
</dbReference>
<dbReference type="Pfam" id="PF13288">
    <property type="entry name" value="DXPR_C"/>
    <property type="match status" value="1"/>
</dbReference>
<dbReference type="PIRSF" id="PIRSF006205">
    <property type="entry name" value="Dxp_reductismrs"/>
    <property type="match status" value="1"/>
</dbReference>
<dbReference type="SUPFAM" id="SSF69055">
    <property type="entry name" value="1-deoxy-D-xylulose-5-phosphate reductoisomerase, C-terminal domain"/>
    <property type="match status" value="1"/>
</dbReference>
<dbReference type="SUPFAM" id="SSF55347">
    <property type="entry name" value="Glyceraldehyde-3-phosphate dehydrogenase-like, C-terminal domain"/>
    <property type="match status" value="1"/>
</dbReference>
<dbReference type="SUPFAM" id="SSF51735">
    <property type="entry name" value="NAD(P)-binding Rossmann-fold domains"/>
    <property type="match status" value="1"/>
</dbReference>
<gene>
    <name evidence="1" type="primary">dxr</name>
    <name type="ordered locus">SCH_0220</name>
</gene>
<proteinExistence type="inferred from homology"/>
<reference key="1">
    <citation type="journal article" date="2005" name="Nucleic Acids Res.">
        <title>The genome sequence of Salmonella enterica serovar Choleraesuis, a highly invasive and resistant zoonotic pathogen.</title>
        <authorList>
            <person name="Chiu C.-H."/>
            <person name="Tang P."/>
            <person name="Chu C."/>
            <person name="Hu S."/>
            <person name="Bao Q."/>
            <person name="Yu J."/>
            <person name="Chou Y.-Y."/>
            <person name="Wang H.-S."/>
            <person name="Lee Y.-S."/>
        </authorList>
    </citation>
    <scope>NUCLEOTIDE SEQUENCE [LARGE SCALE GENOMIC DNA]</scope>
    <source>
        <strain>SC-B67</strain>
    </source>
</reference>
<sequence length="398" mass="43339">MKQLTILGSTGSIGCSTLDVVRHNPDSFRVIALVAGKNVARMAEQCLEFSPRYAVMDDTSSAEQLKIMLQQHGSRTEVLSGQQAACEMAALDEVGHVMAAIVGAAGLLPTLAAIRAGKTILLANKESLVTCGRLFMDEVKRSNARLLPVDSEHNAIFQSLPQSIQHNLGYADLEQNGVTSILLTGSGGPFRETPMCDLAAMTPDQACRHPNWSMGRKVSVDSATMMNKGLEYIEARWLFNASARQMEVLIHPQSVIHSMVRYQDGSVLAQLGEPDMRTPIAHTMAWPNRVTSGAQPLDFCKLSALTFSAPDYQRYPCLKLAMEAFEQGQAATTALNAANEITVAAFLAQQIRFTDIAGLNLAVLERMDLQEPASVEDVLQVDAIAREVARKQVIRLSR</sequence>
<accession>Q57T35</accession>
<organism>
    <name type="scientific">Salmonella choleraesuis (strain SC-B67)</name>
    <dbReference type="NCBI Taxonomy" id="321314"/>
    <lineage>
        <taxon>Bacteria</taxon>
        <taxon>Pseudomonadati</taxon>
        <taxon>Pseudomonadota</taxon>
        <taxon>Gammaproteobacteria</taxon>
        <taxon>Enterobacterales</taxon>
        <taxon>Enterobacteriaceae</taxon>
        <taxon>Salmonella</taxon>
    </lineage>
</organism>
<feature type="chain" id="PRO_0000163707" description="1-deoxy-D-xylulose 5-phosphate reductoisomerase">
    <location>
        <begin position="1"/>
        <end position="398"/>
    </location>
</feature>
<feature type="binding site" evidence="1">
    <location>
        <position position="10"/>
    </location>
    <ligand>
        <name>NADPH</name>
        <dbReference type="ChEBI" id="CHEBI:57783"/>
    </ligand>
</feature>
<feature type="binding site" evidence="1">
    <location>
        <position position="11"/>
    </location>
    <ligand>
        <name>NADPH</name>
        <dbReference type="ChEBI" id="CHEBI:57783"/>
    </ligand>
</feature>
<feature type="binding site" evidence="1">
    <location>
        <position position="12"/>
    </location>
    <ligand>
        <name>NADPH</name>
        <dbReference type="ChEBI" id="CHEBI:57783"/>
    </ligand>
</feature>
<feature type="binding site" evidence="1">
    <location>
        <position position="13"/>
    </location>
    <ligand>
        <name>NADPH</name>
        <dbReference type="ChEBI" id="CHEBI:57783"/>
    </ligand>
</feature>
<feature type="binding site" evidence="1">
    <location>
        <position position="36"/>
    </location>
    <ligand>
        <name>NADPH</name>
        <dbReference type="ChEBI" id="CHEBI:57783"/>
    </ligand>
</feature>
<feature type="binding site" evidence="1">
    <location>
        <position position="37"/>
    </location>
    <ligand>
        <name>NADPH</name>
        <dbReference type="ChEBI" id="CHEBI:57783"/>
    </ligand>
</feature>
<feature type="binding site" evidence="1">
    <location>
        <position position="38"/>
    </location>
    <ligand>
        <name>NADPH</name>
        <dbReference type="ChEBI" id="CHEBI:57783"/>
    </ligand>
</feature>
<feature type="binding site" evidence="1">
    <location>
        <position position="124"/>
    </location>
    <ligand>
        <name>NADPH</name>
        <dbReference type="ChEBI" id="CHEBI:57783"/>
    </ligand>
</feature>
<feature type="binding site" evidence="1">
    <location>
        <position position="125"/>
    </location>
    <ligand>
        <name>1-deoxy-D-xylulose 5-phosphate</name>
        <dbReference type="ChEBI" id="CHEBI:57792"/>
    </ligand>
</feature>
<feature type="binding site" evidence="1">
    <location>
        <position position="126"/>
    </location>
    <ligand>
        <name>NADPH</name>
        <dbReference type="ChEBI" id="CHEBI:57783"/>
    </ligand>
</feature>
<feature type="binding site" evidence="1">
    <location>
        <position position="150"/>
    </location>
    <ligand>
        <name>Mn(2+)</name>
        <dbReference type="ChEBI" id="CHEBI:29035"/>
    </ligand>
</feature>
<feature type="binding site" evidence="1">
    <location>
        <position position="151"/>
    </location>
    <ligand>
        <name>1-deoxy-D-xylulose 5-phosphate</name>
        <dbReference type="ChEBI" id="CHEBI:57792"/>
    </ligand>
</feature>
<feature type="binding site" evidence="1">
    <location>
        <position position="152"/>
    </location>
    <ligand>
        <name>1-deoxy-D-xylulose 5-phosphate</name>
        <dbReference type="ChEBI" id="CHEBI:57792"/>
    </ligand>
</feature>
<feature type="binding site" evidence="1">
    <location>
        <position position="152"/>
    </location>
    <ligand>
        <name>Mn(2+)</name>
        <dbReference type="ChEBI" id="CHEBI:29035"/>
    </ligand>
</feature>
<feature type="binding site" evidence="1">
    <location>
        <position position="186"/>
    </location>
    <ligand>
        <name>1-deoxy-D-xylulose 5-phosphate</name>
        <dbReference type="ChEBI" id="CHEBI:57792"/>
    </ligand>
</feature>
<feature type="binding site" evidence="1">
    <location>
        <position position="209"/>
    </location>
    <ligand>
        <name>1-deoxy-D-xylulose 5-phosphate</name>
        <dbReference type="ChEBI" id="CHEBI:57792"/>
    </ligand>
</feature>
<feature type="binding site" evidence="1">
    <location>
        <position position="215"/>
    </location>
    <ligand>
        <name>NADPH</name>
        <dbReference type="ChEBI" id="CHEBI:57783"/>
    </ligand>
</feature>
<feature type="binding site" evidence="1">
    <location>
        <position position="222"/>
    </location>
    <ligand>
        <name>1-deoxy-D-xylulose 5-phosphate</name>
        <dbReference type="ChEBI" id="CHEBI:57792"/>
    </ligand>
</feature>
<feature type="binding site" evidence="1">
    <location>
        <position position="227"/>
    </location>
    <ligand>
        <name>1-deoxy-D-xylulose 5-phosphate</name>
        <dbReference type="ChEBI" id="CHEBI:57792"/>
    </ligand>
</feature>
<feature type="binding site" evidence="1">
    <location>
        <position position="228"/>
    </location>
    <ligand>
        <name>1-deoxy-D-xylulose 5-phosphate</name>
        <dbReference type="ChEBI" id="CHEBI:57792"/>
    </ligand>
</feature>
<feature type="binding site" evidence="1">
    <location>
        <position position="231"/>
    </location>
    <ligand>
        <name>1-deoxy-D-xylulose 5-phosphate</name>
        <dbReference type="ChEBI" id="CHEBI:57792"/>
    </ligand>
</feature>
<feature type="binding site" evidence="1">
    <location>
        <position position="231"/>
    </location>
    <ligand>
        <name>Mn(2+)</name>
        <dbReference type="ChEBI" id="CHEBI:29035"/>
    </ligand>
</feature>
<evidence type="ECO:0000255" key="1">
    <source>
        <dbReference type="HAMAP-Rule" id="MF_00183"/>
    </source>
</evidence>
<evidence type="ECO:0000305" key="2"/>
<comment type="function">
    <text evidence="1">Catalyzes the NADPH-dependent rearrangement and reduction of 1-deoxy-D-xylulose-5-phosphate (DXP) to 2-C-methyl-D-erythritol 4-phosphate (MEP).</text>
</comment>
<comment type="catalytic activity">
    <reaction evidence="1">
        <text>2-C-methyl-D-erythritol 4-phosphate + NADP(+) = 1-deoxy-D-xylulose 5-phosphate + NADPH + H(+)</text>
        <dbReference type="Rhea" id="RHEA:13717"/>
        <dbReference type="ChEBI" id="CHEBI:15378"/>
        <dbReference type="ChEBI" id="CHEBI:57783"/>
        <dbReference type="ChEBI" id="CHEBI:57792"/>
        <dbReference type="ChEBI" id="CHEBI:58262"/>
        <dbReference type="ChEBI" id="CHEBI:58349"/>
        <dbReference type="EC" id="1.1.1.267"/>
    </reaction>
    <physiologicalReaction direction="right-to-left" evidence="1">
        <dbReference type="Rhea" id="RHEA:13719"/>
    </physiologicalReaction>
</comment>
<comment type="cofactor">
    <cofactor evidence="1">
        <name>Mg(2+)</name>
        <dbReference type="ChEBI" id="CHEBI:18420"/>
    </cofactor>
    <cofactor evidence="1">
        <name>Mn(2+)</name>
        <dbReference type="ChEBI" id="CHEBI:29035"/>
    </cofactor>
</comment>
<comment type="pathway">
    <text evidence="1">Isoprenoid biosynthesis; isopentenyl diphosphate biosynthesis via DXP pathway; isopentenyl diphosphate from 1-deoxy-D-xylulose 5-phosphate: step 1/6.</text>
</comment>
<comment type="subunit">
    <text evidence="1">Homodimer.</text>
</comment>
<comment type="similarity">
    <text evidence="1">Belongs to the DXR family.</text>
</comment>
<comment type="sequence caution" evidence="2">
    <conflict type="frameshift">
        <sequence resource="EMBL-CDS" id="AAX64126"/>
    </conflict>
</comment>